<dbReference type="EC" id="2.5.1.7" evidence="1"/>
<dbReference type="EMBL" id="CP000789">
    <property type="protein sequence ID" value="ABU72566.1"/>
    <property type="molecule type" value="Genomic_DNA"/>
</dbReference>
<dbReference type="RefSeq" id="WP_005432829.1">
    <property type="nucleotide sequence ID" value="NC_022269.1"/>
</dbReference>
<dbReference type="SMR" id="A7MSC7"/>
<dbReference type="GeneID" id="67376150"/>
<dbReference type="KEGG" id="vha:VIBHAR_03652"/>
<dbReference type="PATRIC" id="fig|338187.25.peg.2584"/>
<dbReference type="UniPathway" id="UPA00219"/>
<dbReference type="Proteomes" id="UP000008152">
    <property type="component" value="Chromosome I"/>
</dbReference>
<dbReference type="GO" id="GO:0005737">
    <property type="term" value="C:cytoplasm"/>
    <property type="evidence" value="ECO:0007669"/>
    <property type="project" value="UniProtKB-SubCell"/>
</dbReference>
<dbReference type="GO" id="GO:0008760">
    <property type="term" value="F:UDP-N-acetylglucosamine 1-carboxyvinyltransferase activity"/>
    <property type="evidence" value="ECO:0007669"/>
    <property type="project" value="UniProtKB-UniRule"/>
</dbReference>
<dbReference type="GO" id="GO:0051301">
    <property type="term" value="P:cell division"/>
    <property type="evidence" value="ECO:0007669"/>
    <property type="project" value="UniProtKB-KW"/>
</dbReference>
<dbReference type="GO" id="GO:0071555">
    <property type="term" value="P:cell wall organization"/>
    <property type="evidence" value="ECO:0007669"/>
    <property type="project" value="UniProtKB-KW"/>
</dbReference>
<dbReference type="GO" id="GO:0009252">
    <property type="term" value="P:peptidoglycan biosynthetic process"/>
    <property type="evidence" value="ECO:0007669"/>
    <property type="project" value="UniProtKB-UniRule"/>
</dbReference>
<dbReference type="GO" id="GO:0008360">
    <property type="term" value="P:regulation of cell shape"/>
    <property type="evidence" value="ECO:0007669"/>
    <property type="project" value="UniProtKB-KW"/>
</dbReference>
<dbReference type="GO" id="GO:0019277">
    <property type="term" value="P:UDP-N-acetylgalactosamine biosynthetic process"/>
    <property type="evidence" value="ECO:0007669"/>
    <property type="project" value="InterPro"/>
</dbReference>
<dbReference type="CDD" id="cd01555">
    <property type="entry name" value="UdpNAET"/>
    <property type="match status" value="1"/>
</dbReference>
<dbReference type="FunFam" id="3.65.10.10:FF:000001">
    <property type="entry name" value="UDP-N-acetylglucosamine 1-carboxyvinyltransferase"/>
    <property type="match status" value="1"/>
</dbReference>
<dbReference type="Gene3D" id="3.65.10.10">
    <property type="entry name" value="Enolpyruvate transferase domain"/>
    <property type="match status" value="2"/>
</dbReference>
<dbReference type="HAMAP" id="MF_00111">
    <property type="entry name" value="MurA"/>
    <property type="match status" value="1"/>
</dbReference>
<dbReference type="InterPro" id="IPR001986">
    <property type="entry name" value="Enolpyruvate_Tfrase_dom"/>
</dbReference>
<dbReference type="InterPro" id="IPR036968">
    <property type="entry name" value="Enolpyruvate_Tfrase_sf"/>
</dbReference>
<dbReference type="InterPro" id="IPR050068">
    <property type="entry name" value="MurA_subfamily"/>
</dbReference>
<dbReference type="InterPro" id="IPR013792">
    <property type="entry name" value="RNA3'P_cycl/enolpyr_Trfase_a/b"/>
</dbReference>
<dbReference type="InterPro" id="IPR005750">
    <property type="entry name" value="UDP_GlcNAc_COvinyl_MurA"/>
</dbReference>
<dbReference type="NCBIfam" id="TIGR01072">
    <property type="entry name" value="murA"/>
    <property type="match status" value="1"/>
</dbReference>
<dbReference type="NCBIfam" id="NF006873">
    <property type="entry name" value="PRK09369.1"/>
    <property type="match status" value="1"/>
</dbReference>
<dbReference type="PANTHER" id="PTHR43783">
    <property type="entry name" value="UDP-N-ACETYLGLUCOSAMINE 1-CARBOXYVINYLTRANSFERASE"/>
    <property type="match status" value="1"/>
</dbReference>
<dbReference type="PANTHER" id="PTHR43783:SF1">
    <property type="entry name" value="UDP-N-ACETYLGLUCOSAMINE 1-CARBOXYVINYLTRANSFERASE"/>
    <property type="match status" value="1"/>
</dbReference>
<dbReference type="Pfam" id="PF00275">
    <property type="entry name" value="EPSP_synthase"/>
    <property type="match status" value="1"/>
</dbReference>
<dbReference type="SUPFAM" id="SSF55205">
    <property type="entry name" value="EPT/RTPC-like"/>
    <property type="match status" value="1"/>
</dbReference>
<name>MURA_VIBC1</name>
<accession>A7MSC7</accession>
<reference key="1">
    <citation type="submission" date="2007-08" db="EMBL/GenBank/DDBJ databases">
        <authorList>
            <consortium name="The Vibrio harveyi Genome Sequencing Project"/>
            <person name="Bassler B."/>
            <person name="Clifton S.W."/>
            <person name="Fulton L."/>
            <person name="Delehaunty K."/>
            <person name="Fronick C."/>
            <person name="Harrison M."/>
            <person name="Markivic C."/>
            <person name="Fulton R."/>
            <person name="Tin-Wollam A.-M."/>
            <person name="Shah N."/>
            <person name="Pepin K."/>
            <person name="Nash W."/>
            <person name="Thiruvilangam P."/>
            <person name="Bhonagiri V."/>
            <person name="Waters C."/>
            <person name="Tu K.C."/>
            <person name="Irgon J."/>
            <person name="Wilson R.K."/>
        </authorList>
    </citation>
    <scope>NUCLEOTIDE SEQUENCE [LARGE SCALE GENOMIC DNA]</scope>
    <source>
        <strain>ATCC BAA-1116 / BB120</strain>
    </source>
</reference>
<proteinExistence type="inferred from homology"/>
<gene>
    <name evidence="1" type="primary">murA</name>
    <name type="ordered locus">VIBHAR_03652</name>
</gene>
<feature type="chain" id="PRO_1000023121" description="UDP-N-acetylglucosamine 1-carboxyvinyltransferase">
    <location>
        <begin position="1"/>
        <end position="421"/>
    </location>
</feature>
<feature type="active site" description="Proton donor" evidence="1">
    <location>
        <position position="116"/>
    </location>
</feature>
<feature type="binding site" evidence="1">
    <location>
        <begin position="23"/>
        <end position="24"/>
    </location>
    <ligand>
        <name>phosphoenolpyruvate</name>
        <dbReference type="ChEBI" id="CHEBI:58702"/>
    </ligand>
</feature>
<feature type="binding site" evidence="1">
    <location>
        <position position="92"/>
    </location>
    <ligand>
        <name>UDP-N-acetyl-alpha-D-glucosamine</name>
        <dbReference type="ChEBI" id="CHEBI:57705"/>
    </ligand>
</feature>
<feature type="binding site" evidence="1">
    <location>
        <begin position="121"/>
        <end position="125"/>
    </location>
    <ligand>
        <name>UDP-N-acetyl-alpha-D-glucosamine</name>
        <dbReference type="ChEBI" id="CHEBI:57705"/>
    </ligand>
</feature>
<feature type="binding site" evidence="1">
    <location>
        <begin position="161"/>
        <end position="164"/>
    </location>
    <ligand>
        <name>UDP-N-acetyl-alpha-D-glucosamine</name>
        <dbReference type="ChEBI" id="CHEBI:57705"/>
    </ligand>
</feature>
<feature type="binding site" evidence="1">
    <location>
        <position position="306"/>
    </location>
    <ligand>
        <name>UDP-N-acetyl-alpha-D-glucosamine</name>
        <dbReference type="ChEBI" id="CHEBI:57705"/>
    </ligand>
</feature>
<feature type="binding site" evidence="1">
    <location>
        <position position="328"/>
    </location>
    <ligand>
        <name>UDP-N-acetyl-alpha-D-glucosamine</name>
        <dbReference type="ChEBI" id="CHEBI:57705"/>
    </ligand>
</feature>
<feature type="modified residue" description="2-(S-cysteinyl)pyruvic acid O-phosphothioketal" evidence="1">
    <location>
        <position position="116"/>
    </location>
</feature>
<sequence length="421" mass="44383">MEKFRVIGSDKPLVGEVTISGAKNAALPILFASILAEEPVEVANVPHLRDIDTTMELLKRLGAKVSRNGSVHVDPSSINEYCAPYDLVKTMRASIWALGPLVARFGQGQVSLPGGCAIGARPVDLHITGLEQLGATITLEDGYVKAEVDGRLKGAHIVMDKVSVGATITIMCAAALAEGTTTLDNAAREPEIVDTADFLNTLGAKISGAGTDTITIEGVERLGGGKHNVVADRIETGTFLVAAAVSGGKVVCRNTNAHLLEAVLAKLEEAGALVETGEDWISVDMTDRELKAVSIRTAPHPGFPTDMQAQFTLLNMMAKGGGVITETIFENRFMHVPELMRMGAKAEIEGNTVICGDVDSLSGAQVMATDLRASASLVIAGCIAKGETIVDRIYHIDRGYDKIENKLSALGANIERVSEAG</sequence>
<organism>
    <name type="scientific">Vibrio campbellii (strain ATCC BAA-1116)</name>
    <dbReference type="NCBI Taxonomy" id="2902295"/>
    <lineage>
        <taxon>Bacteria</taxon>
        <taxon>Pseudomonadati</taxon>
        <taxon>Pseudomonadota</taxon>
        <taxon>Gammaproteobacteria</taxon>
        <taxon>Vibrionales</taxon>
        <taxon>Vibrionaceae</taxon>
        <taxon>Vibrio</taxon>
    </lineage>
</organism>
<comment type="function">
    <text evidence="1">Cell wall formation. Adds enolpyruvyl to UDP-N-acetylglucosamine.</text>
</comment>
<comment type="catalytic activity">
    <reaction evidence="1">
        <text>phosphoenolpyruvate + UDP-N-acetyl-alpha-D-glucosamine = UDP-N-acetyl-3-O-(1-carboxyvinyl)-alpha-D-glucosamine + phosphate</text>
        <dbReference type="Rhea" id="RHEA:18681"/>
        <dbReference type="ChEBI" id="CHEBI:43474"/>
        <dbReference type="ChEBI" id="CHEBI:57705"/>
        <dbReference type="ChEBI" id="CHEBI:58702"/>
        <dbReference type="ChEBI" id="CHEBI:68483"/>
        <dbReference type="EC" id="2.5.1.7"/>
    </reaction>
</comment>
<comment type="pathway">
    <text evidence="1">Cell wall biogenesis; peptidoglycan biosynthesis.</text>
</comment>
<comment type="subcellular location">
    <subcellularLocation>
        <location evidence="1">Cytoplasm</location>
    </subcellularLocation>
</comment>
<comment type="similarity">
    <text evidence="1">Belongs to the EPSP synthase family. MurA subfamily.</text>
</comment>
<protein>
    <recommendedName>
        <fullName evidence="1">UDP-N-acetylglucosamine 1-carboxyvinyltransferase</fullName>
        <ecNumber evidence="1">2.5.1.7</ecNumber>
    </recommendedName>
    <alternativeName>
        <fullName evidence="1">Enoylpyruvate transferase</fullName>
    </alternativeName>
    <alternativeName>
        <fullName evidence="1">UDP-N-acetylglucosamine enolpyruvyl transferase</fullName>
        <shortName evidence="1">EPT</shortName>
    </alternativeName>
</protein>
<evidence type="ECO:0000255" key="1">
    <source>
        <dbReference type="HAMAP-Rule" id="MF_00111"/>
    </source>
</evidence>
<keyword id="KW-0131">Cell cycle</keyword>
<keyword id="KW-0132">Cell division</keyword>
<keyword id="KW-0133">Cell shape</keyword>
<keyword id="KW-0961">Cell wall biogenesis/degradation</keyword>
<keyword id="KW-0963">Cytoplasm</keyword>
<keyword id="KW-0573">Peptidoglycan synthesis</keyword>
<keyword id="KW-0670">Pyruvate</keyword>
<keyword id="KW-0808">Transferase</keyword>